<reference key="1">
    <citation type="journal article" date="2000" name="Science">
        <title>The genome sequence of Drosophila melanogaster.</title>
        <authorList>
            <person name="Adams M.D."/>
            <person name="Celniker S.E."/>
            <person name="Holt R.A."/>
            <person name="Evans C.A."/>
            <person name="Gocayne J.D."/>
            <person name="Amanatides P.G."/>
            <person name="Scherer S.E."/>
            <person name="Li P.W."/>
            <person name="Hoskins R.A."/>
            <person name="Galle R.F."/>
            <person name="George R.A."/>
            <person name="Lewis S.E."/>
            <person name="Richards S."/>
            <person name="Ashburner M."/>
            <person name="Henderson S.N."/>
            <person name="Sutton G.G."/>
            <person name="Wortman J.R."/>
            <person name="Yandell M.D."/>
            <person name="Zhang Q."/>
            <person name="Chen L.X."/>
            <person name="Brandon R.C."/>
            <person name="Rogers Y.-H.C."/>
            <person name="Blazej R.G."/>
            <person name="Champe M."/>
            <person name="Pfeiffer B.D."/>
            <person name="Wan K.H."/>
            <person name="Doyle C."/>
            <person name="Baxter E.G."/>
            <person name="Helt G."/>
            <person name="Nelson C.R."/>
            <person name="Miklos G.L.G."/>
            <person name="Abril J.F."/>
            <person name="Agbayani A."/>
            <person name="An H.-J."/>
            <person name="Andrews-Pfannkoch C."/>
            <person name="Baldwin D."/>
            <person name="Ballew R.M."/>
            <person name="Basu A."/>
            <person name="Baxendale J."/>
            <person name="Bayraktaroglu L."/>
            <person name="Beasley E.M."/>
            <person name="Beeson K.Y."/>
            <person name="Benos P.V."/>
            <person name="Berman B.P."/>
            <person name="Bhandari D."/>
            <person name="Bolshakov S."/>
            <person name="Borkova D."/>
            <person name="Botchan M.R."/>
            <person name="Bouck J."/>
            <person name="Brokstein P."/>
            <person name="Brottier P."/>
            <person name="Burtis K.C."/>
            <person name="Busam D.A."/>
            <person name="Butler H."/>
            <person name="Cadieu E."/>
            <person name="Center A."/>
            <person name="Chandra I."/>
            <person name="Cherry J.M."/>
            <person name="Cawley S."/>
            <person name="Dahlke C."/>
            <person name="Davenport L.B."/>
            <person name="Davies P."/>
            <person name="de Pablos B."/>
            <person name="Delcher A."/>
            <person name="Deng Z."/>
            <person name="Mays A.D."/>
            <person name="Dew I."/>
            <person name="Dietz S.M."/>
            <person name="Dodson K."/>
            <person name="Doup L.E."/>
            <person name="Downes M."/>
            <person name="Dugan-Rocha S."/>
            <person name="Dunkov B.C."/>
            <person name="Dunn P."/>
            <person name="Durbin K.J."/>
            <person name="Evangelista C.C."/>
            <person name="Ferraz C."/>
            <person name="Ferriera S."/>
            <person name="Fleischmann W."/>
            <person name="Fosler C."/>
            <person name="Gabrielian A.E."/>
            <person name="Garg N.S."/>
            <person name="Gelbart W.M."/>
            <person name="Glasser K."/>
            <person name="Glodek A."/>
            <person name="Gong F."/>
            <person name="Gorrell J.H."/>
            <person name="Gu Z."/>
            <person name="Guan P."/>
            <person name="Harris M."/>
            <person name="Harris N.L."/>
            <person name="Harvey D.A."/>
            <person name="Heiman T.J."/>
            <person name="Hernandez J.R."/>
            <person name="Houck J."/>
            <person name="Hostin D."/>
            <person name="Houston K.A."/>
            <person name="Howland T.J."/>
            <person name="Wei M.-H."/>
            <person name="Ibegwam C."/>
            <person name="Jalali M."/>
            <person name="Kalush F."/>
            <person name="Karpen G.H."/>
            <person name="Ke Z."/>
            <person name="Kennison J.A."/>
            <person name="Ketchum K.A."/>
            <person name="Kimmel B.E."/>
            <person name="Kodira C.D."/>
            <person name="Kraft C.L."/>
            <person name="Kravitz S."/>
            <person name="Kulp D."/>
            <person name="Lai Z."/>
            <person name="Lasko P."/>
            <person name="Lei Y."/>
            <person name="Levitsky A.A."/>
            <person name="Li J.H."/>
            <person name="Li Z."/>
            <person name="Liang Y."/>
            <person name="Lin X."/>
            <person name="Liu X."/>
            <person name="Mattei B."/>
            <person name="McIntosh T.C."/>
            <person name="McLeod M.P."/>
            <person name="McPherson D."/>
            <person name="Merkulov G."/>
            <person name="Milshina N.V."/>
            <person name="Mobarry C."/>
            <person name="Morris J."/>
            <person name="Moshrefi A."/>
            <person name="Mount S.M."/>
            <person name="Moy M."/>
            <person name="Murphy B."/>
            <person name="Murphy L."/>
            <person name="Muzny D.M."/>
            <person name="Nelson D.L."/>
            <person name="Nelson D.R."/>
            <person name="Nelson K.A."/>
            <person name="Nixon K."/>
            <person name="Nusskern D.R."/>
            <person name="Pacleb J.M."/>
            <person name="Palazzolo M."/>
            <person name="Pittman G.S."/>
            <person name="Pan S."/>
            <person name="Pollard J."/>
            <person name="Puri V."/>
            <person name="Reese M.G."/>
            <person name="Reinert K."/>
            <person name="Remington K."/>
            <person name="Saunders R.D.C."/>
            <person name="Scheeler F."/>
            <person name="Shen H."/>
            <person name="Shue B.C."/>
            <person name="Siden-Kiamos I."/>
            <person name="Simpson M."/>
            <person name="Skupski M.P."/>
            <person name="Smith T.J."/>
            <person name="Spier E."/>
            <person name="Spradling A.C."/>
            <person name="Stapleton M."/>
            <person name="Strong R."/>
            <person name="Sun E."/>
            <person name="Svirskas R."/>
            <person name="Tector C."/>
            <person name="Turner R."/>
            <person name="Venter E."/>
            <person name="Wang A.H."/>
            <person name="Wang X."/>
            <person name="Wang Z.-Y."/>
            <person name="Wassarman D.A."/>
            <person name="Weinstock G.M."/>
            <person name="Weissenbach J."/>
            <person name="Williams S.M."/>
            <person name="Woodage T."/>
            <person name="Worley K.C."/>
            <person name="Wu D."/>
            <person name="Yang S."/>
            <person name="Yao Q.A."/>
            <person name="Ye J."/>
            <person name="Yeh R.-F."/>
            <person name="Zaveri J.S."/>
            <person name="Zhan M."/>
            <person name="Zhang G."/>
            <person name="Zhao Q."/>
            <person name="Zheng L."/>
            <person name="Zheng X.H."/>
            <person name="Zhong F.N."/>
            <person name="Zhong W."/>
            <person name="Zhou X."/>
            <person name="Zhu S.C."/>
            <person name="Zhu X."/>
            <person name="Smith H.O."/>
            <person name="Gibbs R.A."/>
            <person name="Myers E.W."/>
            <person name="Rubin G.M."/>
            <person name="Venter J.C."/>
        </authorList>
    </citation>
    <scope>NUCLEOTIDE SEQUENCE [LARGE SCALE GENOMIC DNA]</scope>
    <source>
        <strain>Berkeley</strain>
    </source>
</reference>
<reference key="2">
    <citation type="journal article" date="2002" name="Genome Biol.">
        <title>Annotation of the Drosophila melanogaster euchromatic genome: a systematic review.</title>
        <authorList>
            <person name="Misra S."/>
            <person name="Crosby M.A."/>
            <person name="Mungall C.J."/>
            <person name="Matthews B.B."/>
            <person name="Campbell K.S."/>
            <person name="Hradecky P."/>
            <person name="Huang Y."/>
            <person name="Kaminker J.S."/>
            <person name="Millburn G.H."/>
            <person name="Prochnik S.E."/>
            <person name="Smith C.D."/>
            <person name="Tupy J.L."/>
            <person name="Whitfield E.J."/>
            <person name="Bayraktaroglu L."/>
            <person name="Berman B.P."/>
            <person name="Bettencourt B.R."/>
            <person name="Celniker S.E."/>
            <person name="de Grey A.D.N.J."/>
            <person name="Drysdale R.A."/>
            <person name="Harris N.L."/>
            <person name="Richter J."/>
            <person name="Russo S."/>
            <person name="Schroeder A.J."/>
            <person name="Shu S.Q."/>
            <person name="Stapleton M."/>
            <person name="Yamada C."/>
            <person name="Ashburner M."/>
            <person name="Gelbart W.M."/>
            <person name="Rubin G.M."/>
            <person name="Lewis S.E."/>
        </authorList>
    </citation>
    <scope>GENOME REANNOTATION</scope>
    <source>
        <strain>Berkeley</strain>
    </source>
</reference>
<reference key="3">
    <citation type="submission" date="2003-08" db="EMBL/GenBank/DDBJ databases">
        <authorList>
            <person name="Stapleton M."/>
            <person name="Brokstein P."/>
            <person name="Hong L."/>
            <person name="Agbayani A."/>
            <person name="Carlson J.W."/>
            <person name="Champe M."/>
            <person name="Chavez C."/>
            <person name="Dorsett V."/>
            <person name="Dresnek D."/>
            <person name="Farfan D."/>
            <person name="Frise E."/>
            <person name="George R.A."/>
            <person name="Gonzalez M."/>
            <person name="Guarin H."/>
            <person name="Kronmiller B."/>
            <person name="Li P.W."/>
            <person name="Liao G."/>
            <person name="Miranda A."/>
            <person name="Mungall C.J."/>
            <person name="Nunoo J."/>
            <person name="Pacleb J.M."/>
            <person name="Paragas V."/>
            <person name="Park S."/>
            <person name="Patel S."/>
            <person name="Phouanenavong S."/>
            <person name="Wan K.H."/>
            <person name="Yu C."/>
            <person name="Lewis S.E."/>
            <person name="Rubin G.M."/>
            <person name="Celniker S.E."/>
        </authorList>
    </citation>
    <scope>NUCLEOTIDE SEQUENCE [LARGE SCALE MRNA]</scope>
    <source>
        <strain>Berkeley</strain>
        <tissue>Head</tissue>
    </source>
</reference>
<reference key="4">
    <citation type="journal article" date="2002" name="Genome Biol.">
        <title>A Drosophila full-length cDNA resource.</title>
        <authorList>
            <person name="Stapleton M."/>
            <person name="Carlson J.W."/>
            <person name="Brokstein P."/>
            <person name="Yu C."/>
            <person name="Champe M."/>
            <person name="George R.A."/>
            <person name="Guarin H."/>
            <person name="Kronmiller B."/>
            <person name="Pacleb J.M."/>
            <person name="Park S."/>
            <person name="Wan K.H."/>
            <person name="Rubin G.M."/>
            <person name="Celniker S.E."/>
        </authorList>
    </citation>
    <scope>NUCLEOTIDE SEQUENCE [LARGE SCALE MRNA] OF 1-74</scope>
    <source>
        <strain>Berkeley</strain>
        <tissue>Testis</tissue>
    </source>
</reference>
<reference key="5">
    <citation type="journal article" date="2008" name="J. Proteome Res.">
        <title>Phosphoproteome analysis of Drosophila melanogaster embryos.</title>
        <authorList>
            <person name="Zhai B."/>
            <person name="Villen J."/>
            <person name="Beausoleil S.A."/>
            <person name="Mintseris J."/>
            <person name="Gygi S.P."/>
        </authorList>
    </citation>
    <scope>PHOSPHORYLATION [LARGE SCALE ANALYSIS] AT SER-18; SER-19 AND SER-20</scope>
    <scope>IDENTIFICATION BY MASS SPECTROMETRY</scope>
    <source>
        <tissue>Embryo</tissue>
    </source>
</reference>
<reference key="6">
    <citation type="journal article" date="2007" name="Mol. Biosyst.">
        <title>An integrated chemical, mass spectrometric and computational strategy for (quantitative) phosphoproteomics: application to Drosophila melanogaster Kc167 cells.</title>
        <authorList>
            <person name="Bodenmiller B."/>
            <person name="Mueller L.N."/>
            <person name="Pedrioli P.G.A."/>
            <person name="Pflieger D."/>
            <person name="Juenger M.A."/>
            <person name="Eng J.K."/>
            <person name="Aebersold R."/>
            <person name="Tao W.A."/>
        </authorList>
    </citation>
    <scope>PHOSPHORYLATION [LARGE SCALE ANALYSIS] AT SER-42</scope>
    <scope>IDENTIFICATION BY MASS SPECTROMETRY</scope>
</reference>
<evidence type="ECO:0000250" key="1"/>
<evidence type="ECO:0000250" key="2">
    <source>
        <dbReference type="UniProtKB" id="Q13371"/>
    </source>
</evidence>
<evidence type="ECO:0000250" key="3">
    <source>
        <dbReference type="UniProtKB" id="Q9DBX2"/>
    </source>
</evidence>
<evidence type="ECO:0000255" key="4"/>
<evidence type="ECO:0000256" key="5">
    <source>
        <dbReference type="SAM" id="MobiDB-lite"/>
    </source>
</evidence>
<evidence type="ECO:0000269" key="6">
    <source>
    </source>
</evidence>
<evidence type="ECO:0000269" key="7">
    <source>
    </source>
</evidence>
<evidence type="ECO:0000305" key="8"/>
<evidence type="ECO:0000312" key="9">
    <source>
        <dbReference type="FlyBase" id="FBgn0036519"/>
    </source>
</evidence>
<evidence type="ECO:0000312" key="10">
    <source>
        <dbReference type="Proteomes" id="UP000000803"/>
    </source>
</evidence>
<gene>
    <name evidence="9" type="primary">PhLP1</name>
    <name evidence="9" type="ORF">CG7650</name>
</gene>
<organism evidence="10">
    <name type="scientific">Drosophila melanogaster</name>
    <name type="common">Fruit fly</name>
    <dbReference type="NCBI Taxonomy" id="7227"/>
    <lineage>
        <taxon>Eukaryota</taxon>
        <taxon>Metazoa</taxon>
        <taxon>Ecdysozoa</taxon>
        <taxon>Arthropoda</taxon>
        <taxon>Hexapoda</taxon>
        <taxon>Insecta</taxon>
        <taxon>Pterygota</taxon>
        <taxon>Neoptera</taxon>
        <taxon>Endopterygota</taxon>
        <taxon>Diptera</taxon>
        <taxon>Brachycera</taxon>
        <taxon>Muscomorpha</taxon>
        <taxon>Ephydroidea</taxon>
        <taxon>Drosophilidae</taxon>
        <taxon>Drosophila</taxon>
        <taxon>Sophophora</taxon>
    </lineage>
</organism>
<protein>
    <recommendedName>
        <fullName evidence="9">Phosducin-like protein 1</fullName>
        <shortName>PHLP</shortName>
    </recommendedName>
</protein>
<name>PHLP1_DROME</name>
<sequence length="276" mass="30976">MATLEDKLLGEKLEYYCSSSEGEDNGDEGGDNKGASGKSRCSGLTIDTNPDATPAGGFRQQSSTNTGPKGVVKDWQRFKQLEAERRDETERQRLALAKKLTITATTSAEDEERKRQEELDAELDELMSEDFLQQYQKQRMAEMLRQTGHHQQFGQVQQLTSHEEFLACVEQENKHTTIIIHIYERQLAACATLNKCLDSLASDYPSIKFAKICSSVAGMSRDFRTKGLPALLVYKAQAVIGNFVRLTDDLSDDFFASDVESFLIEHGIIVDRALYN</sequence>
<accession>Q9VUR7</accession>
<accession>Q8T3W9</accession>
<feature type="chain" id="PRO_0000372652" description="Phosducin-like protein 1">
    <location>
        <begin position="1"/>
        <end position="276"/>
    </location>
</feature>
<feature type="domain" description="Phosducin" evidence="4">
    <location>
        <begin position="62"/>
        <end position="272"/>
    </location>
</feature>
<feature type="region of interest" description="Disordered" evidence="5">
    <location>
        <begin position="18"/>
        <end position="74"/>
    </location>
</feature>
<feature type="region of interest" description="Thioredoxin fold" evidence="1">
    <location>
        <begin position="153"/>
        <end position="276"/>
    </location>
</feature>
<feature type="modified residue" description="Phosphoserine" evidence="7">
    <location>
        <position position="18"/>
    </location>
</feature>
<feature type="modified residue" description="Phosphoserine" evidence="7">
    <location>
        <position position="19"/>
    </location>
</feature>
<feature type="modified residue" description="Phosphoserine" evidence="7">
    <location>
        <position position="20"/>
    </location>
</feature>
<feature type="modified residue" description="Phosphoserine" evidence="6">
    <location>
        <position position="42"/>
    </location>
</feature>
<feature type="sequence conflict" description="In Ref. 4; AAL90197." evidence="8" ref="4">
    <original>G</original>
    <variation>D</variation>
    <location>
        <position position="30"/>
    </location>
</feature>
<feature type="sequence conflict" description="In Ref. 4; AAL90197." evidence="8" ref="4">
    <original>C</original>
    <variation>S</variation>
    <location>
        <position position="41"/>
    </location>
</feature>
<feature type="sequence conflict" description="In Ref. 4; AAL90197." evidence="8" ref="4">
    <original>D</original>
    <variation>N</variation>
    <location>
        <position position="74"/>
    </location>
</feature>
<keyword id="KW-0143">Chaperone</keyword>
<keyword id="KW-0597">Phosphoprotein</keyword>
<keyword id="KW-1185">Reference proteome</keyword>
<proteinExistence type="evidence at protein level"/>
<dbReference type="EMBL" id="AE014296">
    <property type="protein sequence ID" value="AAF49608.2"/>
    <property type="molecule type" value="Genomic_DNA"/>
</dbReference>
<dbReference type="EMBL" id="BT009952">
    <property type="protein sequence ID" value="AAQ22421.1"/>
    <property type="molecule type" value="mRNA"/>
</dbReference>
<dbReference type="EMBL" id="AY089459">
    <property type="protein sequence ID" value="AAL90197.1"/>
    <property type="molecule type" value="mRNA"/>
</dbReference>
<dbReference type="RefSeq" id="NP_648786.1">
    <property type="nucleotide sequence ID" value="NM_140529.3"/>
</dbReference>
<dbReference type="SMR" id="Q9VUR7"/>
<dbReference type="BioGRID" id="65012">
    <property type="interactions" value="2"/>
</dbReference>
<dbReference type="FunCoup" id="Q9VUR7">
    <property type="interactions" value="1032"/>
</dbReference>
<dbReference type="IntAct" id="Q9VUR7">
    <property type="interactions" value="3"/>
</dbReference>
<dbReference type="STRING" id="7227.FBpp0075344"/>
<dbReference type="GlyGen" id="Q9VUR7">
    <property type="glycosylation" value="1 site"/>
</dbReference>
<dbReference type="iPTMnet" id="Q9VUR7"/>
<dbReference type="PaxDb" id="7227-FBpp0075344"/>
<dbReference type="DNASU" id="39694"/>
<dbReference type="EnsemblMetazoa" id="FBtr0075591">
    <property type="protein sequence ID" value="FBpp0075344"/>
    <property type="gene ID" value="FBgn0036519"/>
</dbReference>
<dbReference type="GeneID" id="39694"/>
<dbReference type="KEGG" id="dme:Dmel_CG7650"/>
<dbReference type="UCSC" id="CG7650-RA">
    <property type="organism name" value="d. melanogaster"/>
</dbReference>
<dbReference type="AGR" id="FB:FBgn0036519"/>
<dbReference type="FlyBase" id="FBgn0036519">
    <property type="gene designation" value="PhLP1"/>
</dbReference>
<dbReference type="VEuPathDB" id="VectorBase:FBgn0036519"/>
<dbReference type="eggNOG" id="KOG3171">
    <property type="taxonomic scope" value="Eukaryota"/>
</dbReference>
<dbReference type="GeneTree" id="ENSGT00940000168834"/>
<dbReference type="HOGENOM" id="CLU_085598_0_0_1"/>
<dbReference type="InParanoid" id="Q9VUR7"/>
<dbReference type="OMA" id="GIIEMMP"/>
<dbReference type="OrthoDB" id="70588at2759"/>
<dbReference type="PhylomeDB" id="Q9VUR7"/>
<dbReference type="Reactome" id="R-DME-6814122">
    <property type="pathway name" value="Cooperation of PDCL (PhLP1) and TRiC/CCT in G-protein beta folding"/>
</dbReference>
<dbReference type="BioGRID-ORCS" id="39694">
    <property type="hits" value="0 hits in 3 CRISPR screens"/>
</dbReference>
<dbReference type="GenomeRNAi" id="39694"/>
<dbReference type="PRO" id="PR:Q9VUR7"/>
<dbReference type="Proteomes" id="UP000000803">
    <property type="component" value="Chromosome 3L"/>
</dbReference>
<dbReference type="Bgee" id="FBgn0036519">
    <property type="expression patterns" value="Expressed in saliva-secreting gland and 29 other cell types or tissues"/>
</dbReference>
<dbReference type="GO" id="GO:0005829">
    <property type="term" value="C:cytosol"/>
    <property type="evidence" value="ECO:0000303"/>
    <property type="project" value="FlyBase"/>
</dbReference>
<dbReference type="GO" id="GO:0044183">
    <property type="term" value="F:protein folding chaperone"/>
    <property type="evidence" value="ECO:0000303"/>
    <property type="project" value="FlyBase"/>
</dbReference>
<dbReference type="GO" id="GO:0061077">
    <property type="term" value="P:chaperone-mediated protein folding"/>
    <property type="evidence" value="ECO:0000303"/>
    <property type="project" value="FlyBase"/>
</dbReference>
<dbReference type="GO" id="GO:0008277">
    <property type="term" value="P:regulation of G protein-coupled receptor signaling pathway"/>
    <property type="evidence" value="ECO:0007669"/>
    <property type="project" value="InterPro"/>
</dbReference>
<dbReference type="CDD" id="cd02987">
    <property type="entry name" value="Phd_like_Phd"/>
    <property type="match status" value="1"/>
</dbReference>
<dbReference type="Gene3D" id="3.40.30.10">
    <property type="entry name" value="Glutaredoxin"/>
    <property type="match status" value="1"/>
</dbReference>
<dbReference type="Gene3D" id="1.10.168.10">
    <property type="entry name" value="Phosducin, domain 2"/>
    <property type="match status" value="1"/>
</dbReference>
<dbReference type="InterPro" id="IPR001200">
    <property type="entry name" value="Phosducin"/>
</dbReference>
<dbReference type="InterPro" id="IPR051499">
    <property type="entry name" value="Phosducin-like_reg"/>
</dbReference>
<dbReference type="InterPro" id="IPR023196">
    <property type="entry name" value="Phosducin_N_dom_sf"/>
</dbReference>
<dbReference type="InterPro" id="IPR024253">
    <property type="entry name" value="Phosducin_thioredoxin-like_dom"/>
</dbReference>
<dbReference type="InterPro" id="IPR036249">
    <property type="entry name" value="Thioredoxin-like_sf"/>
</dbReference>
<dbReference type="PANTHER" id="PTHR46052">
    <property type="entry name" value="PHOSDUCIN-LIKE PROTEIN"/>
    <property type="match status" value="1"/>
</dbReference>
<dbReference type="PANTHER" id="PTHR46052:SF1">
    <property type="entry name" value="PHOSDUCIN-LIKE PROTEIN"/>
    <property type="match status" value="1"/>
</dbReference>
<dbReference type="Pfam" id="PF02114">
    <property type="entry name" value="Phosducin"/>
    <property type="match status" value="1"/>
</dbReference>
<dbReference type="PRINTS" id="PR00677">
    <property type="entry name" value="PHOSDUCIN"/>
</dbReference>
<dbReference type="SUPFAM" id="SSF52833">
    <property type="entry name" value="Thioredoxin-like"/>
    <property type="match status" value="1"/>
</dbReference>
<comment type="function">
    <text evidence="1 3">Functions as a co-chaperone for CCT in the assembly of heterotrimeric G protein complexes, facilitates the assembly of both Gbeta-Ggamma and RGS-Gbeta5 heterodimers.</text>
</comment>
<comment type="subunit">
    <text evidence="1 2">Forms a complex with the beta and gamma subunits of the GTP-binding proteins. Interacts with the CCT chaperonin complex.</text>
</comment>
<comment type="similarity">
    <text evidence="8">Belongs to the phosducin family.</text>
</comment>